<reference key="1">
    <citation type="submission" date="2008-06" db="EMBL/GenBank/DDBJ databases">
        <title>Complete sequence of Chlorobium phaeobacteroides BS1.</title>
        <authorList>
            <consortium name="US DOE Joint Genome Institute"/>
            <person name="Lucas S."/>
            <person name="Copeland A."/>
            <person name="Lapidus A."/>
            <person name="Glavina del Rio T."/>
            <person name="Dalin E."/>
            <person name="Tice H."/>
            <person name="Bruce D."/>
            <person name="Goodwin L."/>
            <person name="Pitluck S."/>
            <person name="Schmutz J."/>
            <person name="Larimer F."/>
            <person name="Land M."/>
            <person name="Hauser L."/>
            <person name="Kyrpides N."/>
            <person name="Ovchinnikova G."/>
            <person name="Li T."/>
            <person name="Liu Z."/>
            <person name="Zhao F."/>
            <person name="Overmann J."/>
            <person name="Bryant D.A."/>
            <person name="Richardson P."/>
        </authorList>
    </citation>
    <scope>NUCLEOTIDE SEQUENCE [LARGE SCALE GENOMIC DNA]</scope>
    <source>
        <strain>BS1</strain>
    </source>
</reference>
<accession>B3EMT1</accession>
<sequence>MQKKVTIYTDGACSGNPGKGGWGALLMFGSVKRELSGYSPATTNNRMELMAAIQALEALKEPCEVALYSDSSYLVNAINKGWLKRWTSNNWKTAAKKPVENIDLWKMILELIRLHSVTFHKVKGHSDNEFNNRCDYLATQAIKNNR</sequence>
<dbReference type="EC" id="3.1.26.4" evidence="1"/>
<dbReference type="EMBL" id="CP001101">
    <property type="protein sequence ID" value="ACE03559.1"/>
    <property type="molecule type" value="Genomic_DNA"/>
</dbReference>
<dbReference type="SMR" id="B3EMT1"/>
<dbReference type="STRING" id="331678.Cphamn1_0600"/>
<dbReference type="KEGG" id="cpb:Cphamn1_0600"/>
<dbReference type="eggNOG" id="COG0328">
    <property type="taxonomic scope" value="Bacteria"/>
</dbReference>
<dbReference type="HOGENOM" id="CLU_030894_6_2_10"/>
<dbReference type="OrthoDB" id="7845843at2"/>
<dbReference type="GO" id="GO:0005737">
    <property type="term" value="C:cytoplasm"/>
    <property type="evidence" value="ECO:0007669"/>
    <property type="project" value="UniProtKB-SubCell"/>
</dbReference>
<dbReference type="GO" id="GO:0000287">
    <property type="term" value="F:magnesium ion binding"/>
    <property type="evidence" value="ECO:0007669"/>
    <property type="project" value="UniProtKB-UniRule"/>
</dbReference>
<dbReference type="GO" id="GO:0003676">
    <property type="term" value="F:nucleic acid binding"/>
    <property type="evidence" value="ECO:0007669"/>
    <property type="project" value="InterPro"/>
</dbReference>
<dbReference type="GO" id="GO:0004523">
    <property type="term" value="F:RNA-DNA hybrid ribonuclease activity"/>
    <property type="evidence" value="ECO:0007669"/>
    <property type="project" value="UniProtKB-UniRule"/>
</dbReference>
<dbReference type="GO" id="GO:0043137">
    <property type="term" value="P:DNA replication, removal of RNA primer"/>
    <property type="evidence" value="ECO:0007669"/>
    <property type="project" value="TreeGrafter"/>
</dbReference>
<dbReference type="CDD" id="cd09278">
    <property type="entry name" value="RNase_HI_prokaryote_like"/>
    <property type="match status" value="1"/>
</dbReference>
<dbReference type="FunFam" id="3.30.420.10:FF:000089">
    <property type="entry name" value="Ribonuclease H"/>
    <property type="match status" value="1"/>
</dbReference>
<dbReference type="Gene3D" id="3.30.420.10">
    <property type="entry name" value="Ribonuclease H-like superfamily/Ribonuclease H"/>
    <property type="match status" value="1"/>
</dbReference>
<dbReference type="HAMAP" id="MF_00042">
    <property type="entry name" value="RNase_H"/>
    <property type="match status" value="1"/>
</dbReference>
<dbReference type="InterPro" id="IPR050092">
    <property type="entry name" value="RNase_H"/>
</dbReference>
<dbReference type="InterPro" id="IPR012337">
    <property type="entry name" value="RNaseH-like_sf"/>
</dbReference>
<dbReference type="InterPro" id="IPR002156">
    <property type="entry name" value="RNaseH_domain"/>
</dbReference>
<dbReference type="InterPro" id="IPR036397">
    <property type="entry name" value="RNaseH_sf"/>
</dbReference>
<dbReference type="InterPro" id="IPR022892">
    <property type="entry name" value="RNaseHI"/>
</dbReference>
<dbReference type="NCBIfam" id="NF001236">
    <property type="entry name" value="PRK00203.1"/>
    <property type="match status" value="1"/>
</dbReference>
<dbReference type="PANTHER" id="PTHR10642">
    <property type="entry name" value="RIBONUCLEASE H1"/>
    <property type="match status" value="1"/>
</dbReference>
<dbReference type="PANTHER" id="PTHR10642:SF26">
    <property type="entry name" value="RIBONUCLEASE H1"/>
    <property type="match status" value="1"/>
</dbReference>
<dbReference type="Pfam" id="PF00075">
    <property type="entry name" value="RNase_H"/>
    <property type="match status" value="1"/>
</dbReference>
<dbReference type="SUPFAM" id="SSF53098">
    <property type="entry name" value="Ribonuclease H-like"/>
    <property type="match status" value="1"/>
</dbReference>
<dbReference type="PROSITE" id="PS50879">
    <property type="entry name" value="RNASE_H_1"/>
    <property type="match status" value="1"/>
</dbReference>
<organism>
    <name type="scientific">Chlorobium phaeobacteroides (strain BS1)</name>
    <dbReference type="NCBI Taxonomy" id="331678"/>
    <lineage>
        <taxon>Bacteria</taxon>
        <taxon>Pseudomonadati</taxon>
        <taxon>Chlorobiota</taxon>
        <taxon>Chlorobiia</taxon>
        <taxon>Chlorobiales</taxon>
        <taxon>Chlorobiaceae</taxon>
        <taxon>Chlorobium/Pelodictyon group</taxon>
        <taxon>Chlorobium</taxon>
    </lineage>
</organism>
<feature type="chain" id="PRO_1000090895" description="Ribonuclease H">
    <location>
        <begin position="1"/>
        <end position="146"/>
    </location>
</feature>
<feature type="domain" description="RNase H type-1" evidence="2">
    <location>
        <begin position="1"/>
        <end position="143"/>
    </location>
</feature>
<feature type="binding site" evidence="1">
    <location>
        <position position="10"/>
    </location>
    <ligand>
        <name>Mg(2+)</name>
        <dbReference type="ChEBI" id="CHEBI:18420"/>
        <label>1</label>
    </ligand>
</feature>
<feature type="binding site" evidence="1">
    <location>
        <position position="10"/>
    </location>
    <ligand>
        <name>Mg(2+)</name>
        <dbReference type="ChEBI" id="CHEBI:18420"/>
        <label>2</label>
    </ligand>
</feature>
<feature type="binding site" evidence="1">
    <location>
        <position position="48"/>
    </location>
    <ligand>
        <name>Mg(2+)</name>
        <dbReference type="ChEBI" id="CHEBI:18420"/>
        <label>1</label>
    </ligand>
</feature>
<feature type="binding site" evidence="1">
    <location>
        <position position="70"/>
    </location>
    <ligand>
        <name>Mg(2+)</name>
        <dbReference type="ChEBI" id="CHEBI:18420"/>
        <label>1</label>
    </ligand>
</feature>
<feature type="binding site" evidence="1">
    <location>
        <position position="135"/>
    </location>
    <ligand>
        <name>Mg(2+)</name>
        <dbReference type="ChEBI" id="CHEBI:18420"/>
        <label>2</label>
    </ligand>
</feature>
<evidence type="ECO:0000255" key="1">
    <source>
        <dbReference type="HAMAP-Rule" id="MF_00042"/>
    </source>
</evidence>
<evidence type="ECO:0000255" key="2">
    <source>
        <dbReference type="PROSITE-ProRule" id="PRU00408"/>
    </source>
</evidence>
<gene>
    <name evidence="1" type="primary">rnhA</name>
    <name type="ordered locus">Cphamn1_0600</name>
</gene>
<name>RNH_CHLPB</name>
<keyword id="KW-0963">Cytoplasm</keyword>
<keyword id="KW-0255">Endonuclease</keyword>
<keyword id="KW-0378">Hydrolase</keyword>
<keyword id="KW-0460">Magnesium</keyword>
<keyword id="KW-0479">Metal-binding</keyword>
<keyword id="KW-0540">Nuclease</keyword>
<comment type="function">
    <text evidence="1">Endonuclease that specifically degrades the RNA of RNA-DNA hybrids.</text>
</comment>
<comment type="catalytic activity">
    <reaction evidence="1">
        <text>Endonucleolytic cleavage to 5'-phosphomonoester.</text>
        <dbReference type="EC" id="3.1.26.4"/>
    </reaction>
</comment>
<comment type="cofactor">
    <cofactor evidence="1">
        <name>Mg(2+)</name>
        <dbReference type="ChEBI" id="CHEBI:18420"/>
    </cofactor>
    <text evidence="1">Binds 1 Mg(2+) ion per subunit. May bind a second metal ion at a regulatory site, or after substrate binding.</text>
</comment>
<comment type="subunit">
    <text evidence="1">Monomer.</text>
</comment>
<comment type="subcellular location">
    <subcellularLocation>
        <location evidence="1">Cytoplasm</location>
    </subcellularLocation>
</comment>
<comment type="similarity">
    <text evidence="1">Belongs to the RNase H family.</text>
</comment>
<protein>
    <recommendedName>
        <fullName evidence="1">Ribonuclease H</fullName>
        <shortName evidence="1">RNase H</shortName>
        <ecNumber evidence="1">3.1.26.4</ecNumber>
    </recommendedName>
</protein>
<proteinExistence type="inferred from homology"/>